<accession>F1NCD6</accession>
<keyword id="KW-0002">3D-structure</keyword>
<keyword id="KW-1003">Cell membrane</keyword>
<keyword id="KW-1015">Disulfide bond</keyword>
<keyword id="KW-0256">Endoplasmic reticulum</keyword>
<keyword id="KW-0325">Glycoprotein</keyword>
<keyword id="KW-0445">Lipid transport</keyword>
<keyword id="KW-0472">Membrane</keyword>
<keyword id="KW-1185">Reference proteome</keyword>
<keyword id="KW-0769">Symport</keyword>
<keyword id="KW-0812">Transmembrane</keyword>
<keyword id="KW-1133">Transmembrane helix</keyword>
<keyword id="KW-0813">Transport</keyword>
<dbReference type="EMBL" id="AADN05000596">
    <property type="status" value="NOT_ANNOTATED_CDS"/>
    <property type="molecule type" value="Genomic_DNA"/>
</dbReference>
<dbReference type="RefSeq" id="XP_040545862.1">
    <property type="nucleotide sequence ID" value="XM_040689928.2"/>
</dbReference>
<dbReference type="RefSeq" id="XP_417826.4">
    <property type="nucleotide sequence ID" value="XM_417826.5"/>
</dbReference>
<dbReference type="PDB" id="7MJS">
    <property type="method" value="EM"/>
    <property type="resolution" value="3.03 A"/>
    <property type="chains" value="X=1-528"/>
</dbReference>
<dbReference type="PDBsum" id="7MJS"/>
<dbReference type="EMDB" id="EMD-23883"/>
<dbReference type="SMR" id="F1NCD6"/>
<dbReference type="FunCoup" id="F1NCD6">
    <property type="interactions" value="3"/>
</dbReference>
<dbReference type="STRING" id="9031.ENSGALP00000006158"/>
<dbReference type="GlyCosmos" id="F1NCD6">
    <property type="glycosylation" value="2 sites, No reported glycans"/>
</dbReference>
<dbReference type="GlyGen" id="F1NCD6">
    <property type="glycosylation" value="3 sites"/>
</dbReference>
<dbReference type="iPTMnet" id="F1NCD6"/>
<dbReference type="PaxDb" id="9031-ENSGALP00000006158"/>
<dbReference type="ABCD" id="F1NCD6">
    <property type="antibodies" value="1 sequenced antibody"/>
</dbReference>
<dbReference type="GeneID" id="419679"/>
<dbReference type="KEGG" id="gga:419679"/>
<dbReference type="CTD" id="84879"/>
<dbReference type="VEuPathDB" id="HostDB:geneid_419679"/>
<dbReference type="eggNOG" id="KOG4830">
    <property type="taxonomic scope" value="Eukaryota"/>
</dbReference>
<dbReference type="HOGENOM" id="CLU_027408_6_1_1"/>
<dbReference type="InParanoid" id="F1NCD6"/>
<dbReference type="OrthoDB" id="197206at2759"/>
<dbReference type="TreeFam" id="TF331194"/>
<dbReference type="Reactome" id="R-GGA-1483191">
    <property type="pathway name" value="Synthesis of PC"/>
</dbReference>
<dbReference type="PRO" id="PR:F1NCD6"/>
<dbReference type="Proteomes" id="UP000000539">
    <property type="component" value="Chromosome 23"/>
</dbReference>
<dbReference type="Bgee" id="ENSGALG00000003879">
    <property type="expression patterns" value="Expressed in liver and 12 other cell types or tissues"/>
</dbReference>
<dbReference type="GO" id="GO:0005789">
    <property type="term" value="C:endoplasmic reticulum membrane"/>
    <property type="evidence" value="ECO:0007669"/>
    <property type="project" value="UniProtKB-SubCell"/>
</dbReference>
<dbReference type="GO" id="GO:0005886">
    <property type="term" value="C:plasma membrane"/>
    <property type="evidence" value="ECO:0000318"/>
    <property type="project" value="GO_Central"/>
</dbReference>
<dbReference type="GO" id="GO:0015245">
    <property type="term" value="F:fatty acid transmembrane transporter activity"/>
    <property type="evidence" value="ECO:0000318"/>
    <property type="project" value="GO_Central"/>
</dbReference>
<dbReference type="GO" id="GO:0051978">
    <property type="term" value="F:lysophospholipid:sodium symporter activity"/>
    <property type="evidence" value="ECO:0000318"/>
    <property type="project" value="GO_Central"/>
</dbReference>
<dbReference type="GO" id="GO:0008643">
    <property type="term" value="P:carbohydrate transport"/>
    <property type="evidence" value="ECO:0007669"/>
    <property type="project" value="InterPro"/>
</dbReference>
<dbReference type="GO" id="GO:0015908">
    <property type="term" value="P:fatty acid transport"/>
    <property type="evidence" value="ECO:0000318"/>
    <property type="project" value="GO_Central"/>
</dbReference>
<dbReference type="GO" id="GO:1990379">
    <property type="term" value="P:lipid transport across blood-brain barrier"/>
    <property type="evidence" value="ECO:0000318"/>
    <property type="project" value="GO_Central"/>
</dbReference>
<dbReference type="GO" id="GO:0140329">
    <property type="term" value="P:lysophospholipid translocation"/>
    <property type="evidence" value="ECO:0000318"/>
    <property type="project" value="GO_Central"/>
</dbReference>
<dbReference type="GO" id="GO:0055085">
    <property type="term" value="P:transmembrane transport"/>
    <property type="evidence" value="ECO:0000318"/>
    <property type="project" value="GO_Central"/>
</dbReference>
<dbReference type="FunFam" id="1.20.1250.20:FF:000185">
    <property type="entry name" value="sodium-dependent lysophosphatidylcholine symporter 1 isoform X1"/>
    <property type="match status" value="1"/>
</dbReference>
<dbReference type="FunFam" id="1.20.1250.20:FF:000183">
    <property type="entry name" value="sodium-dependent lysophosphatidylcholine symporter 1 isoform X2"/>
    <property type="match status" value="1"/>
</dbReference>
<dbReference type="Gene3D" id="1.20.1250.20">
    <property type="entry name" value="MFS general substrate transporter like domains"/>
    <property type="match status" value="2"/>
</dbReference>
<dbReference type="InterPro" id="IPR039672">
    <property type="entry name" value="MFS_2"/>
</dbReference>
<dbReference type="InterPro" id="IPR036259">
    <property type="entry name" value="MFS_trans_sf"/>
</dbReference>
<dbReference type="PANTHER" id="PTHR11328">
    <property type="entry name" value="MAJOR FACILITATOR SUPERFAMILY DOMAIN-CONTAINING PROTEIN"/>
    <property type="match status" value="1"/>
</dbReference>
<dbReference type="PANTHER" id="PTHR11328:SF29">
    <property type="entry name" value="SODIUM-DEPENDENT LYSOPHOSPHATIDYLCHOLINE SYMPORTER 1"/>
    <property type="match status" value="1"/>
</dbReference>
<dbReference type="Pfam" id="PF13347">
    <property type="entry name" value="MFS_2"/>
    <property type="match status" value="1"/>
</dbReference>
<dbReference type="SUPFAM" id="SSF103473">
    <property type="entry name" value="MFS general substrate transporter"/>
    <property type="match status" value="1"/>
</dbReference>
<gene>
    <name evidence="5" type="primary">MFSD2A</name>
    <name type="synonym">NLS1</name>
</gene>
<name>NLS1_CHICK</name>
<evidence type="ECO:0000250" key="1">
    <source>
        <dbReference type="UniProtKB" id="Q9DA75"/>
    </source>
</evidence>
<evidence type="ECO:0000255" key="2">
    <source>
        <dbReference type="PROSITE-ProRule" id="PRU00498"/>
    </source>
</evidence>
<evidence type="ECO:0000256" key="3">
    <source>
        <dbReference type="SAM" id="MobiDB-lite"/>
    </source>
</evidence>
<evidence type="ECO:0000269" key="4">
    <source>
    </source>
</evidence>
<evidence type="ECO:0000303" key="5">
    <source>
    </source>
</evidence>
<evidence type="ECO:0000305" key="6"/>
<evidence type="ECO:0007744" key="7">
    <source>
        <dbReference type="PDB" id="7MJS"/>
    </source>
</evidence>
<evidence type="ECO:0007829" key="8">
    <source>
        <dbReference type="PDB" id="7MJS"/>
    </source>
</evidence>
<organism>
    <name type="scientific">Gallus gallus</name>
    <name type="common">Chicken</name>
    <dbReference type="NCBI Taxonomy" id="9031"/>
    <lineage>
        <taxon>Eukaryota</taxon>
        <taxon>Metazoa</taxon>
        <taxon>Chordata</taxon>
        <taxon>Craniata</taxon>
        <taxon>Vertebrata</taxon>
        <taxon>Euteleostomi</taxon>
        <taxon>Archelosauria</taxon>
        <taxon>Archosauria</taxon>
        <taxon>Dinosauria</taxon>
        <taxon>Saurischia</taxon>
        <taxon>Theropoda</taxon>
        <taxon>Coelurosauria</taxon>
        <taxon>Aves</taxon>
        <taxon>Neognathae</taxon>
        <taxon>Galloanserae</taxon>
        <taxon>Galliformes</taxon>
        <taxon>Phasianidae</taxon>
        <taxon>Phasianinae</taxon>
        <taxon>Gallus</taxon>
    </lineage>
</organism>
<sequence length="528" mass="58423">MAGGGGAERVRVGAAAAGLLPPSCRQPRRRESRERLSVCSKLCYAVGGAPYQTTGCALGFFLQIYLLDVAQLDPFYASIILFVGRAWDAITDPMVGFFISKTPWTRFGRLMPWIIFSTPFAVISYFLIWFVPDISTGQVMWYLIFYCIFQTLVTCFHVPYSALTMFISREQSERDSATAYRMTVEVLGTVLGTAIQGQIVGKAVTPCIENPPFLSETNFSVAIRNVNMTHYTGSLADTRNAYMVAAGVIGGLYILCAVILSVGVREKRESSELQSDEPVSFFRGLKLVMNHGAYIKLITGFLFTSLAFMLLEGNFALFCTYTLGFRNEFQNILLAIMLSATLTIPFWQWFLTRFGKKTAVYVGISSAVPFLITVVVLDSNLVVTYIVAVAAGISVAAAFLLPWSMLPDVIDDFKLQHPESRGHEAIFFSFYVFFTKFTSGVSLGISTLSLDFAGYQTRGCSQPSEVNITLKLLVSAVPVGLILLGLLLFKLYPIDEEKRRENKKALQDLREESNSSSESDSTELANIV</sequence>
<reference key="1">
    <citation type="journal article" date="2004" name="Nature">
        <title>Sequence and comparative analysis of the chicken genome provide unique perspectives on vertebrate evolution.</title>
        <authorList>
            <person name="Hillier L.W."/>
            <person name="Miller W."/>
            <person name="Birney E."/>
            <person name="Warren W."/>
            <person name="Hardison R.C."/>
            <person name="Ponting C.P."/>
            <person name="Bork P."/>
            <person name="Burt D.W."/>
            <person name="Groenen M.A.M."/>
            <person name="Delany M.E."/>
            <person name="Dodgson J.B."/>
            <person name="Chinwalla A.T."/>
            <person name="Cliften P.F."/>
            <person name="Clifton S.W."/>
            <person name="Delehaunty K.D."/>
            <person name="Fronick C."/>
            <person name="Fulton R.S."/>
            <person name="Graves T.A."/>
            <person name="Kremitzki C."/>
            <person name="Layman D."/>
            <person name="Magrini V."/>
            <person name="McPherson J.D."/>
            <person name="Miner T.L."/>
            <person name="Minx P."/>
            <person name="Nash W.E."/>
            <person name="Nhan M.N."/>
            <person name="Nelson J.O."/>
            <person name="Oddy L.G."/>
            <person name="Pohl C.S."/>
            <person name="Randall-Maher J."/>
            <person name="Smith S.M."/>
            <person name="Wallis J.W."/>
            <person name="Yang S.-P."/>
            <person name="Romanov M.N."/>
            <person name="Rondelli C.M."/>
            <person name="Paton B."/>
            <person name="Smith J."/>
            <person name="Morrice D."/>
            <person name="Daniels L."/>
            <person name="Tempest H.G."/>
            <person name="Robertson L."/>
            <person name="Masabanda J.S."/>
            <person name="Griffin D.K."/>
            <person name="Vignal A."/>
            <person name="Fillon V."/>
            <person name="Jacobbson L."/>
            <person name="Kerje S."/>
            <person name="Andersson L."/>
            <person name="Crooijmans R.P."/>
            <person name="Aerts J."/>
            <person name="van der Poel J.J."/>
            <person name="Ellegren H."/>
            <person name="Caldwell R.B."/>
            <person name="Hubbard S.J."/>
            <person name="Grafham D.V."/>
            <person name="Kierzek A.M."/>
            <person name="McLaren S.R."/>
            <person name="Overton I.M."/>
            <person name="Arakawa H."/>
            <person name="Beattie K.J."/>
            <person name="Bezzubov Y."/>
            <person name="Boardman P.E."/>
            <person name="Bonfield J.K."/>
            <person name="Croning M.D.R."/>
            <person name="Davies R.M."/>
            <person name="Francis M.D."/>
            <person name="Humphray S.J."/>
            <person name="Scott C.E."/>
            <person name="Taylor R.G."/>
            <person name="Tickle C."/>
            <person name="Brown W.R.A."/>
            <person name="Rogers J."/>
            <person name="Buerstedde J.-M."/>
            <person name="Wilson S.A."/>
            <person name="Stubbs L."/>
            <person name="Ovcharenko I."/>
            <person name="Gordon L."/>
            <person name="Lucas S."/>
            <person name="Miller M.M."/>
            <person name="Inoko H."/>
            <person name="Shiina T."/>
            <person name="Kaufman J."/>
            <person name="Salomonsen J."/>
            <person name="Skjoedt K."/>
            <person name="Wong G.K.-S."/>
            <person name="Wang J."/>
            <person name="Liu B."/>
            <person name="Wang J."/>
            <person name="Yu J."/>
            <person name="Yang H."/>
            <person name="Nefedov M."/>
            <person name="Koriabine M."/>
            <person name="Dejong P.J."/>
            <person name="Goodstadt L."/>
            <person name="Webber C."/>
            <person name="Dickens N.J."/>
            <person name="Letunic I."/>
            <person name="Suyama M."/>
            <person name="Torrents D."/>
            <person name="von Mering C."/>
            <person name="Zdobnov E.M."/>
            <person name="Makova K."/>
            <person name="Nekrutenko A."/>
            <person name="Elnitski L."/>
            <person name="Eswara P."/>
            <person name="King D.C."/>
            <person name="Yang S.-P."/>
            <person name="Tyekucheva S."/>
            <person name="Radakrishnan A."/>
            <person name="Harris R.S."/>
            <person name="Chiaromonte F."/>
            <person name="Taylor J."/>
            <person name="He J."/>
            <person name="Rijnkels M."/>
            <person name="Griffiths-Jones S."/>
            <person name="Ureta-Vidal A."/>
            <person name="Hoffman M.M."/>
            <person name="Severin J."/>
            <person name="Searle S.M.J."/>
            <person name="Law A.S."/>
            <person name="Speed D."/>
            <person name="Waddington D."/>
            <person name="Cheng Z."/>
            <person name="Tuzun E."/>
            <person name="Eichler E."/>
            <person name="Bao Z."/>
            <person name="Flicek P."/>
            <person name="Shteynberg D.D."/>
            <person name="Brent M.R."/>
            <person name="Bye J.M."/>
            <person name="Huckle E.J."/>
            <person name="Chatterji S."/>
            <person name="Dewey C."/>
            <person name="Pachter L."/>
            <person name="Kouranov A."/>
            <person name="Mourelatos Z."/>
            <person name="Hatzigeorgiou A.G."/>
            <person name="Paterson A.H."/>
            <person name="Ivarie R."/>
            <person name="Brandstrom M."/>
            <person name="Axelsson E."/>
            <person name="Backstrom N."/>
            <person name="Berlin S."/>
            <person name="Webster M.T."/>
            <person name="Pourquie O."/>
            <person name="Reymond A."/>
            <person name="Ucla C."/>
            <person name="Antonarakis S.E."/>
            <person name="Long M."/>
            <person name="Emerson J.J."/>
            <person name="Betran E."/>
            <person name="Dupanloup I."/>
            <person name="Kaessmann H."/>
            <person name="Hinrichs A.S."/>
            <person name="Bejerano G."/>
            <person name="Furey T.S."/>
            <person name="Harte R.A."/>
            <person name="Raney B."/>
            <person name="Siepel A."/>
            <person name="Kent W.J."/>
            <person name="Haussler D."/>
            <person name="Eyras E."/>
            <person name="Castelo R."/>
            <person name="Abril J.F."/>
            <person name="Castellano S."/>
            <person name="Camara F."/>
            <person name="Parra G."/>
            <person name="Guigo R."/>
            <person name="Bourque G."/>
            <person name="Tesler G."/>
            <person name="Pevzner P.A."/>
            <person name="Smit A."/>
            <person name="Fulton L.A."/>
            <person name="Mardis E.R."/>
            <person name="Wilson R.K."/>
        </authorList>
    </citation>
    <scope>NUCLEOTIDE SEQUENCE [LARGE SCALE GENOMIC DNA]</scope>
    <source>
        <strain>Red jungle fowl</strain>
    </source>
</reference>
<reference key="2">
    <citation type="journal article" date="2021" name="Nature">
        <title>Structural basis of omega-3 fatty acid transport across the blood-brain barrier.</title>
        <authorList>
            <person name="Cater R.J."/>
            <person name="Chua G.L."/>
            <person name="Erramilli S.K."/>
            <person name="Keener J.E."/>
            <person name="Choy B.C."/>
            <person name="Tokarz P."/>
            <person name="Chin C.F."/>
            <person name="Quek D.Q.Y."/>
            <person name="Kloss B."/>
            <person name="Pepe J.G."/>
            <person name="Parisi G."/>
            <person name="Wong B.H."/>
            <person name="Clarke O.B."/>
            <person name="Marty M.T."/>
            <person name="Kossiakoff A.A."/>
            <person name="Khelashvili G."/>
            <person name="Silver D.L."/>
            <person name="Mancia F."/>
        </authorList>
    </citation>
    <scope>STRUCTURE BY ELECTRON MICROSCOPY (3.03 ANGSTROMS)</scope>
    <scope>TOPOLOGY</scope>
    <scope>DISULFIDE BOND</scope>
    <scope>GLYCOSYLATION AT ASN-218 AND ASN-227</scope>
</reference>
<comment type="function">
    <text evidence="1">Sodium-dependent lysophosphatidylcholine (LPC) symporter, which plays an essential role for blood-brain barrier formation and function (By similarity). Specifically expressed in endothelium of the blood-brain barrier of micro-vessels and transports LPC into the brain (By similarity). Transport of LPC is essential because it constitutes the major mechanism by which docosahexaenoic acid (DHA), an omega-3 fatty acid that is essential for normal brain growth and cognitive function, enters the brain (By similarity). Transports LPC carrying long-chain fatty acids such LPC oleate and LPC palmitate with a minimum acyl chain length of 14 carbons (By similarity). Does not transport docosahexaenoic acid in unesterified fatty acid (By similarity).</text>
</comment>
<comment type="catalytic activity">
    <reaction evidence="1">
        <text>a 1-acyl-sn-glycero-3-phosphocholine(in) + Na(+)(in) = a 1-acyl-sn-glycero-3-phosphocholine(out) + Na(+)(out)</text>
        <dbReference type="Rhea" id="RHEA:44376"/>
        <dbReference type="ChEBI" id="CHEBI:29101"/>
        <dbReference type="ChEBI" id="CHEBI:58168"/>
    </reaction>
</comment>
<comment type="catalytic activity">
    <reaction evidence="1">
        <text>1-(4Z,7Z,10Z,13Z,16Z,19Z-docosahexaenoyl)-sn-glycero-3-phosphocholine(in) + Na(+)(in) = 1-(4Z,7Z,10Z,13Z,16Z,19Z-docosahexaenoyl)-sn-glycero-3-phosphocholine(out) + Na(+)(out)</text>
        <dbReference type="Rhea" id="RHEA:43860"/>
        <dbReference type="ChEBI" id="CHEBI:29101"/>
        <dbReference type="ChEBI" id="CHEBI:73873"/>
    </reaction>
</comment>
<comment type="catalytic activity">
    <reaction evidence="1">
        <text>1-(9Z-octadecenoyl)-sn-glycero-3-phosphocholine(in) + Na(+)(in) = 1-(9Z-octadecenoyl)-sn-glycero-3-phosphocholine(out) + Na(+)(out)</text>
        <dbReference type="Rhea" id="RHEA:43856"/>
        <dbReference type="ChEBI" id="CHEBI:28610"/>
        <dbReference type="ChEBI" id="CHEBI:29101"/>
    </reaction>
</comment>
<comment type="catalytic activity">
    <reaction evidence="1">
        <text>1-hexadecanoyl-sn-glycero-3-phosphocholine(in) + Na(+)(in) = 1-hexadecanoyl-sn-glycero-3-phosphocholine(out) + Na(+)(out)</text>
        <dbReference type="Rhea" id="RHEA:43864"/>
        <dbReference type="ChEBI" id="CHEBI:29101"/>
        <dbReference type="ChEBI" id="CHEBI:72998"/>
    </reaction>
</comment>
<comment type="catalytic activity">
    <reaction evidence="1">
        <text>a 1-acyl-sn-glycero-3-phosphoethanolamine(in) + Na(+)(in) = a 1-acyl-sn-glycero-3-phosphoethanolamine(out) + Na(+)(out)</text>
        <dbReference type="Rhea" id="RHEA:43868"/>
        <dbReference type="ChEBI" id="CHEBI:29101"/>
        <dbReference type="ChEBI" id="CHEBI:64381"/>
    </reaction>
</comment>
<comment type="subcellular location">
    <subcellularLocation>
        <location evidence="1">Cell membrane</location>
        <topology evidence="4">Multi-pass membrane protein</topology>
    </subcellularLocation>
    <subcellularLocation>
        <location evidence="1">Endoplasmic reticulum membrane</location>
        <topology evidence="4">Multi-pass membrane protein</topology>
    </subcellularLocation>
</comment>
<comment type="similarity">
    <text evidence="6">Belongs to the major facilitator superfamily.</text>
</comment>
<proteinExistence type="evidence at protein level"/>
<protein>
    <recommendedName>
        <fullName evidence="6">Sodium-dependent lysophosphatidylcholine symporter 1</fullName>
        <shortName>NLS1</shortName>
        <shortName>Sodium-dependent LPC symporter 1</shortName>
    </recommendedName>
    <alternativeName>
        <fullName evidence="6">Major facilitator superfamily domain-containing protein 2A</fullName>
        <shortName evidence="5">GgMFSD2A</shortName>
    </alternativeName>
</protein>
<feature type="chain" id="PRO_0000455379" description="Sodium-dependent lysophosphatidylcholine symporter 1">
    <location>
        <begin position="1"/>
        <end position="528"/>
    </location>
</feature>
<feature type="topological domain" description="Cytoplasmic" evidence="4 7">
    <location>
        <begin position="1"/>
        <end position="37"/>
    </location>
</feature>
<feature type="transmembrane region" description="Helical" evidence="4 7">
    <location>
        <begin position="38"/>
        <end position="66"/>
    </location>
</feature>
<feature type="topological domain" description="Extracellular" evidence="4 7">
    <location>
        <begin position="67"/>
        <end position="73"/>
    </location>
</feature>
<feature type="transmembrane region" description="Helical" evidence="4 7">
    <location>
        <begin position="74"/>
        <end position="99"/>
    </location>
</feature>
<feature type="topological domain" description="Cytoplasmic" evidence="4 7">
    <location>
        <begin position="100"/>
        <end position="109"/>
    </location>
</feature>
<feature type="transmembrane region" description="Helical" evidence="4 7">
    <location>
        <begin position="110"/>
        <end position="129"/>
    </location>
</feature>
<feature type="topological domain" description="Extracellular" evidence="4 7">
    <location>
        <begin position="130"/>
        <end position="138"/>
    </location>
</feature>
<feature type="transmembrane region" description="Helical" evidence="4 7">
    <location>
        <begin position="139"/>
        <end position="161"/>
    </location>
</feature>
<feature type="topological domain" description="Cytoplasmic" evidence="4 7">
    <location>
        <begin position="162"/>
        <end position="176"/>
    </location>
</feature>
<feature type="transmembrane region" description="Helical" evidence="4 7">
    <location>
        <begin position="177"/>
        <end position="199"/>
    </location>
</feature>
<feature type="topological domain" description="Extracellular" evidence="4 7">
    <location>
        <begin position="200"/>
        <end position="241"/>
    </location>
</feature>
<feature type="transmembrane region" description="Helical" evidence="4 7">
    <location>
        <begin position="242"/>
        <end position="263"/>
    </location>
</feature>
<feature type="topological domain" description="Cytoplasmic" evidence="4 7">
    <location>
        <begin position="264"/>
        <end position="295"/>
    </location>
</feature>
<feature type="transmembrane region" description="Helical" evidence="4 7">
    <location>
        <begin position="296"/>
        <end position="319"/>
    </location>
</feature>
<feature type="topological domain" description="Extracellular" evidence="4 7">
    <location>
        <begin position="320"/>
        <end position="328"/>
    </location>
</feature>
<feature type="transmembrane region" description="Helical" evidence="4 7">
    <location>
        <begin position="329"/>
        <end position="351"/>
    </location>
</feature>
<feature type="topological domain" description="Cytoplasmic" evidence="4 7">
    <location>
        <begin position="352"/>
        <end position="355"/>
    </location>
</feature>
<feature type="transmembrane region" description="Helical" evidence="4 7">
    <location>
        <begin position="356"/>
        <end position="376"/>
    </location>
</feature>
<feature type="topological domain" description="Extracellular" evidence="4 7">
    <location>
        <begin position="377"/>
        <end position="381"/>
    </location>
</feature>
<feature type="transmembrane region" description="Helical" evidence="4 7">
    <location>
        <begin position="382"/>
        <end position="404"/>
    </location>
</feature>
<feature type="topological domain" description="Cytoplasmic" evidence="6">
    <location>
        <begin position="405"/>
        <end position="427"/>
    </location>
</feature>
<feature type="transmembrane region" description="Helical" evidence="4 7">
    <location>
        <begin position="428"/>
        <end position="450"/>
    </location>
</feature>
<feature type="topological domain" description="Extracellular" evidence="4 7">
    <location>
        <begin position="451"/>
        <end position="467"/>
    </location>
</feature>
<feature type="transmembrane region" description="Helical" evidence="4 7">
    <location>
        <begin position="468"/>
        <end position="490"/>
    </location>
</feature>
<feature type="topological domain" description="Cytoplasmic" evidence="4 7">
    <location>
        <begin position="491"/>
        <end position="528"/>
    </location>
</feature>
<feature type="region of interest" description="Disordered" evidence="3">
    <location>
        <begin position="503"/>
        <end position="528"/>
    </location>
</feature>
<feature type="compositionally biased region" description="Basic and acidic residues" evidence="3">
    <location>
        <begin position="503"/>
        <end position="513"/>
    </location>
</feature>
<feature type="compositionally biased region" description="Low complexity" evidence="3">
    <location>
        <begin position="514"/>
        <end position="528"/>
    </location>
</feature>
<feature type="glycosylation site" description="N-linked (GlcNAc...) asparagine" evidence="2 4 7">
    <location>
        <position position="218"/>
    </location>
</feature>
<feature type="glycosylation site" description="N-linked (GlcNAc...) asparagine" evidence="2 4 7">
    <location>
        <position position="227"/>
    </location>
</feature>
<feature type="disulfide bond" evidence="4 7">
    <location>
        <begin position="207"/>
        <end position="460"/>
    </location>
</feature>
<feature type="helix" evidence="8">
    <location>
        <begin position="38"/>
        <end position="41"/>
    </location>
</feature>
<feature type="helix" evidence="8">
    <location>
        <begin position="43"/>
        <end position="46"/>
    </location>
</feature>
<feature type="helix" evidence="8">
    <location>
        <begin position="48"/>
        <end position="68"/>
    </location>
</feature>
<feature type="helix" evidence="8">
    <location>
        <begin position="74"/>
        <end position="98"/>
    </location>
</feature>
<feature type="strand" evidence="8">
    <location>
        <begin position="99"/>
        <end position="102"/>
    </location>
</feature>
<feature type="strand" evidence="8">
    <location>
        <begin position="108"/>
        <end position="110"/>
    </location>
</feature>
<feature type="helix" evidence="8">
    <location>
        <begin position="111"/>
        <end position="126"/>
    </location>
</feature>
<feature type="helix" evidence="8">
    <location>
        <begin position="138"/>
        <end position="161"/>
    </location>
</feature>
<feature type="helix" evidence="8">
    <location>
        <begin position="164"/>
        <end position="167"/>
    </location>
</feature>
<feature type="helix" evidence="8">
    <location>
        <begin position="171"/>
        <end position="201"/>
    </location>
</feature>
<feature type="helix" evidence="8">
    <location>
        <begin position="219"/>
        <end position="222"/>
    </location>
</feature>
<feature type="helix" evidence="8">
    <location>
        <begin position="229"/>
        <end position="263"/>
    </location>
</feature>
<feature type="helix" evidence="8">
    <location>
        <begin position="281"/>
        <end position="288"/>
    </location>
</feature>
<feature type="helix" evidence="8">
    <location>
        <begin position="292"/>
        <end position="321"/>
    </location>
</feature>
<feature type="turn" evidence="8">
    <location>
        <begin position="326"/>
        <end position="328"/>
    </location>
</feature>
<feature type="helix" evidence="8">
    <location>
        <begin position="329"/>
        <end position="353"/>
    </location>
</feature>
<feature type="helix" evidence="8">
    <location>
        <begin position="356"/>
        <end position="365"/>
    </location>
</feature>
<feature type="helix" evidence="8">
    <location>
        <begin position="367"/>
        <end position="376"/>
    </location>
</feature>
<feature type="helix" evidence="8">
    <location>
        <begin position="381"/>
        <end position="416"/>
    </location>
</feature>
<feature type="helix" evidence="8">
    <location>
        <begin position="426"/>
        <end position="452"/>
    </location>
</feature>
<feature type="strand" evidence="8">
    <location>
        <begin position="459"/>
        <end position="461"/>
    </location>
</feature>
<feature type="helix" evidence="8">
    <location>
        <begin position="464"/>
        <end position="472"/>
    </location>
</feature>
<feature type="turn" evidence="8">
    <location>
        <begin position="473"/>
        <end position="475"/>
    </location>
</feature>
<feature type="helix" evidence="8">
    <location>
        <begin position="476"/>
        <end position="488"/>
    </location>
</feature>
<feature type="helix" evidence="8">
    <location>
        <begin position="489"/>
        <end position="491"/>
    </location>
</feature>
<feature type="helix" evidence="8">
    <location>
        <begin position="498"/>
        <end position="504"/>
    </location>
</feature>